<reference key="1">
    <citation type="journal article" date="1999" name="DNA Res.">
        <title>Complete genome sequence of an aerobic hyper-thermophilic crenarchaeon, Aeropyrum pernix K1.</title>
        <authorList>
            <person name="Kawarabayasi Y."/>
            <person name="Hino Y."/>
            <person name="Horikawa H."/>
            <person name="Yamazaki S."/>
            <person name="Haikawa Y."/>
            <person name="Jin-no K."/>
            <person name="Takahashi M."/>
            <person name="Sekine M."/>
            <person name="Baba S."/>
            <person name="Ankai A."/>
            <person name="Kosugi H."/>
            <person name="Hosoyama A."/>
            <person name="Fukui S."/>
            <person name="Nagai Y."/>
            <person name="Nishijima K."/>
            <person name="Nakazawa H."/>
            <person name="Takamiya M."/>
            <person name="Masuda S."/>
            <person name="Funahashi T."/>
            <person name="Tanaka T."/>
            <person name="Kudoh Y."/>
            <person name="Yamazaki J."/>
            <person name="Kushida N."/>
            <person name="Oguchi A."/>
            <person name="Aoki K."/>
            <person name="Kubota K."/>
            <person name="Nakamura Y."/>
            <person name="Nomura N."/>
            <person name="Sako Y."/>
            <person name="Kikuchi H."/>
        </authorList>
    </citation>
    <scope>NUCLEOTIDE SEQUENCE [LARGE SCALE GENOMIC DNA]</scope>
    <source>
        <strain>ATCC 700893 / DSM 11879 / JCM 9820 / NBRC 100138 / K1</strain>
    </source>
</reference>
<reference key="2">
    <citation type="unpublished observations" date="2001-04">
        <authorList>
            <person name="Medigue C."/>
            <person name="Bocs S."/>
        </authorList>
    </citation>
    <scope>IDENTIFICATION</scope>
</reference>
<feature type="chain" id="PRO_0000131847" description="Large ribosomal subunit protein eL34">
    <location>
        <begin position="1"/>
        <end position="90"/>
    </location>
</feature>
<feature type="region of interest" description="Disordered" evidence="1">
    <location>
        <begin position="38"/>
        <end position="65"/>
    </location>
</feature>
<feature type="compositionally biased region" description="Basic residues" evidence="1">
    <location>
        <begin position="51"/>
        <end position="62"/>
    </location>
</feature>
<dbReference type="EMBL" id="BA000002">
    <property type="protein sequence ID" value="BAF34768.1"/>
    <property type="molecule type" value="Genomic_DNA"/>
</dbReference>
<dbReference type="RefSeq" id="WP_010866111.1">
    <property type="nucleotide sequence ID" value="NC_000854.2"/>
</dbReference>
<dbReference type="SMR" id="P58026"/>
<dbReference type="STRING" id="272557.APE_0978a"/>
<dbReference type="EnsemblBacteria" id="BAF34768">
    <property type="protein sequence ID" value="BAF34768"/>
    <property type="gene ID" value="APE_0978a"/>
</dbReference>
<dbReference type="GeneID" id="1445553"/>
<dbReference type="KEGG" id="ape:APE_0978a"/>
<dbReference type="PATRIC" id="fig|272557.25.peg.707"/>
<dbReference type="eggNOG" id="arCOG04168">
    <property type="taxonomic scope" value="Archaea"/>
</dbReference>
<dbReference type="Proteomes" id="UP000002518">
    <property type="component" value="Chromosome"/>
</dbReference>
<dbReference type="GO" id="GO:1990904">
    <property type="term" value="C:ribonucleoprotein complex"/>
    <property type="evidence" value="ECO:0007669"/>
    <property type="project" value="UniProtKB-KW"/>
</dbReference>
<dbReference type="GO" id="GO:0005840">
    <property type="term" value="C:ribosome"/>
    <property type="evidence" value="ECO:0007669"/>
    <property type="project" value="UniProtKB-KW"/>
</dbReference>
<dbReference type="GO" id="GO:0003735">
    <property type="term" value="F:structural constituent of ribosome"/>
    <property type="evidence" value="ECO:0007669"/>
    <property type="project" value="InterPro"/>
</dbReference>
<dbReference type="GO" id="GO:0006412">
    <property type="term" value="P:translation"/>
    <property type="evidence" value="ECO:0007669"/>
    <property type="project" value="UniProtKB-UniRule"/>
</dbReference>
<dbReference type="Gene3D" id="6.20.340.10">
    <property type="match status" value="1"/>
</dbReference>
<dbReference type="HAMAP" id="MF_00349">
    <property type="entry name" value="Ribosomal_eL34"/>
    <property type="match status" value="1"/>
</dbReference>
<dbReference type="InterPro" id="IPR008195">
    <property type="entry name" value="Ribosomal_eL34"/>
</dbReference>
<dbReference type="InterPro" id="IPR038562">
    <property type="entry name" value="Ribosomal_eL34_C_sf"/>
</dbReference>
<dbReference type="InterPro" id="IPR018065">
    <property type="entry name" value="Ribosomal_eL34_CS"/>
</dbReference>
<dbReference type="InterPro" id="IPR047868">
    <property type="entry name" value="Ribosomal_L34e_arc-type"/>
</dbReference>
<dbReference type="NCBIfam" id="NF003143">
    <property type="entry name" value="PRK04059.1"/>
    <property type="match status" value="1"/>
</dbReference>
<dbReference type="PANTHER" id="PTHR10759">
    <property type="entry name" value="60S RIBOSOMAL PROTEIN L34"/>
    <property type="match status" value="1"/>
</dbReference>
<dbReference type="Pfam" id="PF01199">
    <property type="entry name" value="Ribosomal_L34e"/>
    <property type="match status" value="1"/>
</dbReference>
<dbReference type="PRINTS" id="PR01250">
    <property type="entry name" value="RIBOSOMALL34"/>
</dbReference>
<dbReference type="PROSITE" id="PS01145">
    <property type="entry name" value="RIBOSOMAL_L34E"/>
    <property type="match status" value="1"/>
</dbReference>
<organism>
    <name type="scientific">Aeropyrum pernix (strain ATCC 700893 / DSM 11879 / JCM 9820 / NBRC 100138 / K1)</name>
    <dbReference type="NCBI Taxonomy" id="272557"/>
    <lineage>
        <taxon>Archaea</taxon>
        <taxon>Thermoproteota</taxon>
        <taxon>Thermoprotei</taxon>
        <taxon>Desulfurococcales</taxon>
        <taxon>Desulfurococcaceae</taxon>
        <taxon>Aeropyrum</taxon>
    </lineage>
</organism>
<name>RL34_AERPE</name>
<sequence>MVRPGLRSRSLRRVYRRTPGGSTVVHYERRKPGPARCARCGRPLGGVPRGRPPRVRRLSKTAKRPERPYGGVLCSTCLAEMIFEAIAGSS</sequence>
<evidence type="ECO:0000256" key="1">
    <source>
        <dbReference type="SAM" id="MobiDB-lite"/>
    </source>
</evidence>
<evidence type="ECO:0000305" key="2"/>
<accession>P58026</accession>
<accession>Q05E33</accession>
<proteinExistence type="inferred from homology"/>
<protein>
    <recommendedName>
        <fullName evidence="2">Large ribosomal subunit protein eL34</fullName>
    </recommendedName>
    <alternativeName>
        <fullName>50S ribosomal protein L34e</fullName>
    </alternativeName>
</protein>
<comment type="similarity">
    <text evidence="2">Belongs to the eukaryotic ribosomal protein eL34 family.</text>
</comment>
<gene>
    <name type="primary">rpl34e</name>
    <name type="ordered locus">APE_0978a</name>
</gene>
<keyword id="KW-1185">Reference proteome</keyword>
<keyword id="KW-0687">Ribonucleoprotein</keyword>
<keyword id="KW-0689">Ribosomal protein</keyword>